<feature type="chain" id="PRO_1000081548" description="Small ribosomal subunit protein uS10">
    <location>
        <begin position="1"/>
        <end position="103"/>
    </location>
</feature>
<reference key="1">
    <citation type="submission" date="2008-02" db="EMBL/GenBank/DDBJ databases">
        <title>Complete sequence of Escherichia coli C str. ATCC 8739.</title>
        <authorList>
            <person name="Copeland A."/>
            <person name="Lucas S."/>
            <person name="Lapidus A."/>
            <person name="Glavina del Rio T."/>
            <person name="Dalin E."/>
            <person name="Tice H."/>
            <person name="Bruce D."/>
            <person name="Goodwin L."/>
            <person name="Pitluck S."/>
            <person name="Kiss H."/>
            <person name="Brettin T."/>
            <person name="Detter J.C."/>
            <person name="Han C."/>
            <person name="Kuske C.R."/>
            <person name="Schmutz J."/>
            <person name="Larimer F."/>
            <person name="Land M."/>
            <person name="Hauser L."/>
            <person name="Kyrpides N."/>
            <person name="Mikhailova N."/>
            <person name="Ingram L."/>
            <person name="Richardson P."/>
        </authorList>
    </citation>
    <scope>NUCLEOTIDE SEQUENCE [LARGE SCALE GENOMIC DNA]</scope>
    <source>
        <strain>ATCC 8739 / DSM 1576 / NBRC 3972 / NCIMB 8545 / WDCM 00012 / Crooks</strain>
    </source>
</reference>
<organism>
    <name type="scientific">Escherichia coli (strain ATCC 8739 / DSM 1576 / NBRC 3972 / NCIMB 8545 / WDCM 00012 / Crooks)</name>
    <dbReference type="NCBI Taxonomy" id="481805"/>
    <lineage>
        <taxon>Bacteria</taxon>
        <taxon>Pseudomonadati</taxon>
        <taxon>Pseudomonadota</taxon>
        <taxon>Gammaproteobacteria</taxon>
        <taxon>Enterobacterales</taxon>
        <taxon>Enterobacteriaceae</taxon>
        <taxon>Escherichia</taxon>
    </lineage>
</organism>
<dbReference type="EMBL" id="CP000946">
    <property type="protein sequence ID" value="ACA76070.1"/>
    <property type="molecule type" value="Genomic_DNA"/>
</dbReference>
<dbReference type="RefSeq" id="WP_001181004.1">
    <property type="nucleotide sequence ID" value="NZ_MTFT01000014.1"/>
</dbReference>
<dbReference type="SMR" id="B1IPX8"/>
<dbReference type="GeneID" id="93778666"/>
<dbReference type="KEGG" id="ecl:EcolC_0392"/>
<dbReference type="HOGENOM" id="CLU_122625_1_3_6"/>
<dbReference type="GO" id="GO:1990904">
    <property type="term" value="C:ribonucleoprotein complex"/>
    <property type="evidence" value="ECO:0007669"/>
    <property type="project" value="UniProtKB-KW"/>
</dbReference>
<dbReference type="GO" id="GO:0005840">
    <property type="term" value="C:ribosome"/>
    <property type="evidence" value="ECO:0007669"/>
    <property type="project" value="UniProtKB-KW"/>
</dbReference>
<dbReference type="GO" id="GO:0003735">
    <property type="term" value="F:structural constituent of ribosome"/>
    <property type="evidence" value="ECO:0007669"/>
    <property type="project" value="InterPro"/>
</dbReference>
<dbReference type="GO" id="GO:0000049">
    <property type="term" value="F:tRNA binding"/>
    <property type="evidence" value="ECO:0007669"/>
    <property type="project" value="UniProtKB-UniRule"/>
</dbReference>
<dbReference type="GO" id="GO:0006412">
    <property type="term" value="P:translation"/>
    <property type="evidence" value="ECO:0007669"/>
    <property type="project" value="UniProtKB-UniRule"/>
</dbReference>
<dbReference type="FunFam" id="3.30.70.600:FF:000001">
    <property type="entry name" value="30S ribosomal protein S10"/>
    <property type="match status" value="1"/>
</dbReference>
<dbReference type="Gene3D" id="3.30.70.600">
    <property type="entry name" value="Ribosomal protein S10 domain"/>
    <property type="match status" value="1"/>
</dbReference>
<dbReference type="HAMAP" id="MF_00508">
    <property type="entry name" value="Ribosomal_uS10"/>
    <property type="match status" value="1"/>
</dbReference>
<dbReference type="InterPro" id="IPR001848">
    <property type="entry name" value="Ribosomal_uS10"/>
</dbReference>
<dbReference type="InterPro" id="IPR018268">
    <property type="entry name" value="Ribosomal_uS10_CS"/>
</dbReference>
<dbReference type="InterPro" id="IPR027486">
    <property type="entry name" value="Ribosomal_uS10_dom"/>
</dbReference>
<dbReference type="InterPro" id="IPR036838">
    <property type="entry name" value="Ribosomal_uS10_dom_sf"/>
</dbReference>
<dbReference type="NCBIfam" id="NF001861">
    <property type="entry name" value="PRK00596.1"/>
    <property type="match status" value="1"/>
</dbReference>
<dbReference type="NCBIfam" id="TIGR01049">
    <property type="entry name" value="rpsJ_bact"/>
    <property type="match status" value="1"/>
</dbReference>
<dbReference type="PANTHER" id="PTHR11700">
    <property type="entry name" value="30S RIBOSOMAL PROTEIN S10 FAMILY MEMBER"/>
    <property type="match status" value="1"/>
</dbReference>
<dbReference type="Pfam" id="PF00338">
    <property type="entry name" value="Ribosomal_S10"/>
    <property type="match status" value="1"/>
</dbReference>
<dbReference type="PRINTS" id="PR00971">
    <property type="entry name" value="RIBOSOMALS10"/>
</dbReference>
<dbReference type="SMART" id="SM01403">
    <property type="entry name" value="Ribosomal_S10"/>
    <property type="match status" value="1"/>
</dbReference>
<dbReference type="SUPFAM" id="SSF54999">
    <property type="entry name" value="Ribosomal protein S10"/>
    <property type="match status" value="1"/>
</dbReference>
<dbReference type="PROSITE" id="PS00361">
    <property type="entry name" value="RIBOSOMAL_S10"/>
    <property type="match status" value="1"/>
</dbReference>
<protein>
    <recommendedName>
        <fullName evidence="1">Small ribosomal subunit protein uS10</fullName>
    </recommendedName>
    <alternativeName>
        <fullName evidence="2">30S ribosomal protein S10</fullName>
    </alternativeName>
</protein>
<gene>
    <name evidence="1" type="primary">rpsJ</name>
    <name type="ordered locus">EcolC_0392</name>
</gene>
<sequence length="103" mass="11736">MQNQRIRIRLKAFDHRLIDQATAEIVETAKRTGAQVRGPIPLPTRKERFTVLISPHVNKDARDQYEIRTHLRLVDIVEPTEKTVDALMRLDLAAGVDVQISLG</sequence>
<keyword id="KW-0687">Ribonucleoprotein</keyword>
<keyword id="KW-0689">Ribosomal protein</keyword>
<comment type="function">
    <text evidence="1">Involved in the binding of tRNA to the ribosomes.</text>
</comment>
<comment type="subunit">
    <text evidence="1">Part of the 30S ribosomal subunit.</text>
</comment>
<comment type="similarity">
    <text evidence="1">Belongs to the universal ribosomal protein uS10 family.</text>
</comment>
<name>RS10_ECOLC</name>
<evidence type="ECO:0000255" key="1">
    <source>
        <dbReference type="HAMAP-Rule" id="MF_00508"/>
    </source>
</evidence>
<evidence type="ECO:0000305" key="2"/>
<proteinExistence type="inferred from homology"/>
<accession>B1IPX8</accession>